<proteinExistence type="inferred from homology"/>
<gene>
    <name evidence="1" type="primary">rnc</name>
    <name type="ordered locus">SE_0908</name>
</gene>
<comment type="function">
    <text evidence="1">Digests double-stranded RNA. Involved in the processing of primary rRNA transcript to yield the immediate precursors to the large and small rRNAs (23S and 16S). Processes some mRNAs, and tRNAs when they are encoded in the rRNA operon. Processes pre-crRNA and tracrRNA of type II CRISPR loci if present in the organism.</text>
</comment>
<comment type="catalytic activity">
    <reaction evidence="1">
        <text>Endonucleolytic cleavage to 5'-phosphomonoester.</text>
        <dbReference type="EC" id="3.1.26.3"/>
    </reaction>
</comment>
<comment type="cofactor">
    <cofactor evidence="1">
        <name>Mg(2+)</name>
        <dbReference type="ChEBI" id="CHEBI:18420"/>
    </cofactor>
</comment>
<comment type="subunit">
    <text evidence="1">Homodimer.</text>
</comment>
<comment type="subcellular location">
    <subcellularLocation>
        <location evidence="1">Cytoplasm</location>
    </subcellularLocation>
</comment>
<comment type="similarity">
    <text evidence="1">Belongs to the ribonuclease III family.</text>
</comment>
<reference key="1">
    <citation type="journal article" date="2003" name="Mol. Microbiol.">
        <title>Genome-based analysis of virulence genes in a non-biofilm-forming Staphylococcus epidermidis strain (ATCC 12228).</title>
        <authorList>
            <person name="Zhang Y.-Q."/>
            <person name="Ren S.-X."/>
            <person name="Li H.-L."/>
            <person name="Wang Y.-X."/>
            <person name="Fu G."/>
            <person name="Yang J."/>
            <person name="Qin Z.-Q."/>
            <person name="Miao Y.-G."/>
            <person name="Wang W.-Y."/>
            <person name="Chen R.-S."/>
            <person name="Shen Y."/>
            <person name="Chen Z."/>
            <person name="Yuan Z.-H."/>
            <person name="Zhao G.-P."/>
            <person name="Qu D."/>
            <person name="Danchin A."/>
            <person name="Wen Y.-M."/>
        </authorList>
    </citation>
    <scope>NUCLEOTIDE SEQUENCE [LARGE SCALE GENOMIC DNA]</scope>
    <source>
        <strain>ATCC 12228 / FDA PCI 1200</strain>
    </source>
</reference>
<dbReference type="EC" id="3.1.26.3" evidence="1"/>
<dbReference type="EMBL" id="AE015929">
    <property type="protein sequence ID" value="AAO04505.1"/>
    <property type="molecule type" value="Genomic_DNA"/>
</dbReference>
<dbReference type="RefSeq" id="NP_764463.1">
    <property type="nucleotide sequence ID" value="NC_004461.1"/>
</dbReference>
<dbReference type="RefSeq" id="WP_001830158.1">
    <property type="nucleotide sequence ID" value="NZ_WBME01000001.1"/>
</dbReference>
<dbReference type="SMR" id="Q8CPI1"/>
<dbReference type="KEGG" id="sep:SE_0908"/>
<dbReference type="PATRIC" id="fig|176280.10.peg.881"/>
<dbReference type="eggNOG" id="COG0571">
    <property type="taxonomic scope" value="Bacteria"/>
</dbReference>
<dbReference type="HOGENOM" id="CLU_000907_1_3_9"/>
<dbReference type="OrthoDB" id="9805026at2"/>
<dbReference type="Proteomes" id="UP000001411">
    <property type="component" value="Chromosome"/>
</dbReference>
<dbReference type="GO" id="GO:0005737">
    <property type="term" value="C:cytoplasm"/>
    <property type="evidence" value="ECO:0007669"/>
    <property type="project" value="UniProtKB-SubCell"/>
</dbReference>
<dbReference type="GO" id="GO:0003725">
    <property type="term" value="F:double-stranded RNA binding"/>
    <property type="evidence" value="ECO:0007669"/>
    <property type="project" value="TreeGrafter"/>
</dbReference>
<dbReference type="GO" id="GO:0046872">
    <property type="term" value="F:metal ion binding"/>
    <property type="evidence" value="ECO:0007669"/>
    <property type="project" value="UniProtKB-KW"/>
</dbReference>
<dbReference type="GO" id="GO:0004525">
    <property type="term" value="F:ribonuclease III activity"/>
    <property type="evidence" value="ECO:0007669"/>
    <property type="project" value="UniProtKB-UniRule"/>
</dbReference>
<dbReference type="GO" id="GO:0019843">
    <property type="term" value="F:rRNA binding"/>
    <property type="evidence" value="ECO:0007669"/>
    <property type="project" value="UniProtKB-KW"/>
</dbReference>
<dbReference type="GO" id="GO:0006397">
    <property type="term" value="P:mRNA processing"/>
    <property type="evidence" value="ECO:0007669"/>
    <property type="project" value="UniProtKB-UniRule"/>
</dbReference>
<dbReference type="GO" id="GO:0010468">
    <property type="term" value="P:regulation of gene expression"/>
    <property type="evidence" value="ECO:0007669"/>
    <property type="project" value="TreeGrafter"/>
</dbReference>
<dbReference type="GO" id="GO:0006364">
    <property type="term" value="P:rRNA processing"/>
    <property type="evidence" value="ECO:0007669"/>
    <property type="project" value="UniProtKB-UniRule"/>
</dbReference>
<dbReference type="GO" id="GO:0008033">
    <property type="term" value="P:tRNA processing"/>
    <property type="evidence" value="ECO:0007669"/>
    <property type="project" value="UniProtKB-KW"/>
</dbReference>
<dbReference type="CDD" id="cd10845">
    <property type="entry name" value="DSRM_RNAse_III_family"/>
    <property type="match status" value="1"/>
</dbReference>
<dbReference type="CDD" id="cd00593">
    <property type="entry name" value="RIBOc"/>
    <property type="match status" value="1"/>
</dbReference>
<dbReference type="FunFam" id="1.10.1520.10:FF:000001">
    <property type="entry name" value="Ribonuclease 3"/>
    <property type="match status" value="1"/>
</dbReference>
<dbReference type="FunFam" id="3.30.160.20:FF:000003">
    <property type="entry name" value="Ribonuclease 3"/>
    <property type="match status" value="1"/>
</dbReference>
<dbReference type="Gene3D" id="3.30.160.20">
    <property type="match status" value="1"/>
</dbReference>
<dbReference type="Gene3D" id="1.10.1520.10">
    <property type="entry name" value="Ribonuclease III domain"/>
    <property type="match status" value="1"/>
</dbReference>
<dbReference type="HAMAP" id="MF_00104">
    <property type="entry name" value="RNase_III"/>
    <property type="match status" value="1"/>
</dbReference>
<dbReference type="InterPro" id="IPR014720">
    <property type="entry name" value="dsRBD_dom"/>
</dbReference>
<dbReference type="InterPro" id="IPR011907">
    <property type="entry name" value="RNase_III"/>
</dbReference>
<dbReference type="InterPro" id="IPR000999">
    <property type="entry name" value="RNase_III_dom"/>
</dbReference>
<dbReference type="InterPro" id="IPR036389">
    <property type="entry name" value="RNase_III_sf"/>
</dbReference>
<dbReference type="NCBIfam" id="TIGR02191">
    <property type="entry name" value="RNaseIII"/>
    <property type="match status" value="1"/>
</dbReference>
<dbReference type="PANTHER" id="PTHR11207:SF0">
    <property type="entry name" value="RIBONUCLEASE 3"/>
    <property type="match status" value="1"/>
</dbReference>
<dbReference type="PANTHER" id="PTHR11207">
    <property type="entry name" value="RIBONUCLEASE III"/>
    <property type="match status" value="1"/>
</dbReference>
<dbReference type="Pfam" id="PF00035">
    <property type="entry name" value="dsrm"/>
    <property type="match status" value="1"/>
</dbReference>
<dbReference type="Pfam" id="PF14622">
    <property type="entry name" value="Ribonucleas_3_3"/>
    <property type="match status" value="1"/>
</dbReference>
<dbReference type="SMART" id="SM00358">
    <property type="entry name" value="DSRM"/>
    <property type="match status" value="1"/>
</dbReference>
<dbReference type="SMART" id="SM00535">
    <property type="entry name" value="RIBOc"/>
    <property type="match status" value="1"/>
</dbReference>
<dbReference type="SUPFAM" id="SSF54768">
    <property type="entry name" value="dsRNA-binding domain-like"/>
    <property type="match status" value="1"/>
</dbReference>
<dbReference type="SUPFAM" id="SSF69065">
    <property type="entry name" value="RNase III domain-like"/>
    <property type="match status" value="1"/>
</dbReference>
<dbReference type="PROSITE" id="PS50137">
    <property type="entry name" value="DS_RBD"/>
    <property type="match status" value="1"/>
</dbReference>
<dbReference type="PROSITE" id="PS00517">
    <property type="entry name" value="RNASE_3_1"/>
    <property type="match status" value="1"/>
</dbReference>
<dbReference type="PROSITE" id="PS50142">
    <property type="entry name" value="RNASE_3_2"/>
    <property type="match status" value="1"/>
</dbReference>
<sequence>MANQKKKEMVHNFQQKFTDKMKSLGLHFKNIDLYQQAFSHSSFINDFNMNRLEHNERLEFLGDAVLELTVSRYLFDRHPHLPEGNLTKMRATIVCEPSLVIFANKIKLNELILLGKGEEKTGGRTRPSLISDAFEAFVGALYLDQGLDSVWTFAEKVIFPYVEDDELVGVVDFKTQFQEYVHSQNKGDVTYQLIKEEGPAHHRLFTSEVILENKAVAEGKGKTKKESEQKAAEQAYKLMKNKKSL</sequence>
<evidence type="ECO:0000255" key="1">
    <source>
        <dbReference type="HAMAP-Rule" id="MF_00104"/>
    </source>
</evidence>
<organism>
    <name type="scientific">Staphylococcus epidermidis (strain ATCC 12228 / FDA PCI 1200)</name>
    <dbReference type="NCBI Taxonomy" id="176280"/>
    <lineage>
        <taxon>Bacteria</taxon>
        <taxon>Bacillati</taxon>
        <taxon>Bacillota</taxon>
        <taxon>Bacilli</taxon>
        <taxon>Bacillales</taxon>
        <taxon>Staphylococcaceae</taxon>
        <taxon>Staphylococcus</taxon>
    </lineage>
</organism>
<keyword id="KW-0963">Cytoplasm</keyword>
<keyword id="KW-0255">Endonuclease</keyword>
<keyword id="KW-0378">Hydrolase</keyword>
<keyword id="KW-0460">Magnesium</keyword>
<keyword id="KW-0479">Metal-binding</keyword>
<keyword id="KW-0507">mRNA processing</keyword>
<keyword id="KW-0540">Nuclease</keyword>
<keyword id="KW-0694">RNA-binding</keyword>
<keyword id="KW-0698">rRNA processing</keyword>
<keyword id="KW-0699">rRNA-binding</keyword>
<keyword id="KW-0819">tRNA processing</keyword>
<feature type="chain" id="PRO_0000180438" description="Ribonuclease 3">
    <location>
        <begin position="1"/>
        <end position="245"/>
    </location>
</feature>
<feature type="domain" description="RNase III" evidence="1">
    <location>
        <begin position="17"/>
        <end position="146"/>
    </location>
</feature>
<feature type="domain" description="DRBM" evidence="1">
    <location>
        <begin position="172"/>
        <end position="241"/>
    </location>
</feature>
<feature type="active site" evidence="1">
    <location>
        <position position="63"/>
    </location>
</feature>
<feature type="active site" evidence="1">
    <location>
        <position position="135"/>
    </location>
</feature>
<feature type="binding site" evidence="1">
    <location>
        <position position="59"/>
    </location>
    <ligand>
        <name>Mg(2+)</name>
        <dbReference type="ChEBI" id="CHEBI:18420"/>
    </ligand>
</feature>
<feature type="binding site" evidence="1">
    <location>
        <position position="132"/>
    </location>
    <ligand>
        <name>Mg(2+)</name>
        <dbReference type="ChEBI" id="CHEBI:18420"/>
    </ligand>
</feature>
<feature type="binding site" evidence="1">
    <location>
        <position position="135"/>
    </location>
    <ligand>
        <name>Mg(2+)</name>
        <dbReference type="ChEBI" id="CHEBI:18420"/>
    </ligand>
</feature>
<protein>
    <recommendedName>
        <fullName evidence="1">Ribonuclease 3</fullName>
        <ecNumber evidence="1">3.1.26.3</ecNumber>
    </recommendedName>
    <alternativeName>
        <fullName evidence="1">Ribonuclease III</fullName>
        <shortName evidence="1">RNase III</shortName>
    </alternativeName>
</protein>
<name>RNC_STAES</name>
<accession>Q8CPI1</accession>